<comment type="subcellular location">
    <subcellularLocation>
        <location evidence="1">Host membrane</location>
        <topology evidence="1">Single-pass type I membrane protein</topology>
    </subcellularLocation>
</comment>
<comment type="similarity">
    <text evidence="3">Belongs to the ephemerovirus glycoprotein family.</text>
</comment>
<reference key="1">
    <citation type="journal article" date="1992" name="Virology">
        <title>The genome of bovine ephemeral fever rhabdovirus contains two related glycoprotein genes.</title>
        <authorList>
            <person name="Walker P.J."/>
            <person name="Byrne K.A."/>
            <person name="Riding G.A."/>
            <person name="Cowley J.A."/>
            <person name="Wang Y."/>
            <person name="McWilliam S."/>
        </authorList>
    </citation>
    <scope>NUCLEOTIDE SEQUENCE [GENOMIC RNA]</scope>
</reference>
<reference key="2">
    <citation type="journal article" date="1994" name="J. Gen. Virol.">
        <title>Structural and antigenic analysis of the nucleoprotein of bovine ephemeral fever rhabdovirus.</title>
        <authorList>
            <person name="Walker P.J."/>
            <person name="Wang Y."/>
            <person name="Cowley J.A."/>
            <person name="McWilliam S.M."/>
            <person name="Prehaud C.J."/>
        </authorList>
    </citation>
    <scope>NUCLEOTIDE SEQUENCE [GENOMIC RNA]</scope>
</reference>
<reference key="3">
    <citation type="journal article" date="2000" name="Virus Res.">
        <title>RNA polymerase (L) gene and genome terminal sequences of ephemeroviruses bovine ephemeral fever virus and Adelaide River virus indicate a close relationship to vesiculoviruses.</title>
        <authorList>
            <person name="Dhillon J."/>
            <person name="Cowley J.A."/>
            <person name="Wang Y."/>
            <person name="Walker P.J."/>
        </authorList>
    </citation>
    <scope>NUCLEOTIDE SEQUENCE [GENOMIC RNA]</scope>
</reference>
<name>VGLN_BEFVB</name>
<sequence>MFLQLFNIVLIYGVRTSQSTWINYPENCTSISLQDGLRELCGGDQLMNIRNQLLDDTYKEIGEICTPNYSMEKKSEGYRCASIKKKVICKMLENFDHEVTYISESHPIDKAKCHELIINKDLLNNIEEPYYPPPKCDSSKSSVSELEFIKLINYDVILDPVGFQNEDNYLFQFDKTNPIPIDYIYQSEFCQSKNWICHGDKSYIPLEIFKGDNQASIRLELIKLSIIYDSNFGELPIRDACRLHYCGKPAIKLFNGAIIKIKESPIVLGLPSCNRSRIEMPETNLAKKRYSNVGPVLLTTLNKRFELCKKIKKNLELKQPIPINNLHYLAPFEPGKHPALVYRLVSTTINQSLRNKVVPVSMLSMSMCEYITGQIIEDGIKRNLTDEDTVIILANNKEIKWKDLKGRENWYQEQANPNIIDKNPDHLSYYWYNGVMRREDKFTYPSRYILQTLKKIYTDTERESRISFFKFRLERNITKTEVIKFRDIEESSDQDHSQSVNKTLEGDDYWNWVEETTSDKNKTDGSRGDEKQTIQNKEYWNEESSIWGISTIITVLGIYYIYRKNRREKIFLNMKHRVQRFFKLDY</sequence>
<keyword id="KW-0325">Glycoprotein</keyword>
<keyword id="KW-1043">Host membrane</keyword>
<keyword id="KW-0472">Membrane</keyword>
<keyword id="KW-1185">Reference proteome</keyword>
<keyword id="KW-0732">Signal</keyword>
<keyword id="KW-0812">Transmembrane</keyword>
<keyword id="KW-1133">Transmembrane helix</keyword>
<accession>P32596</accession>
<accession>Q77N35</accession>
<protein>
    <recommendedName>
        <fullName>Non-structural glycoprotein GNS</fullName>
    </recommendedName>
</protein>
<organismHost>
    <name type="scientific">Bos taurus</name>
    <name type="common">Bovine</name>
    <dbReference type="NCBI Taxonomy" id="9913"/>
</organismHost>
<organismHost>
    <name type="scientific">Bubalus bubalis</name>
    <name type="common">Domestic water buffalo</name>
    <dbReference type="NCBI Taxonomy" id="89462"/>
</organismHost>
<organismHost>
    <name type="scientific">Culicoides</name>
    <dbReference type="NCBI Taxonomy" id="58271"/>
</organismHost>
<organismHost>
    <name type="scientific">Syncerus caffer</name>
    <name type="common">African buffalo</name>
    <dbReference type="NCBI Taxonomy" id="9970"/>
</organismHost>
<gene>
    <name type="primary">GNS</name>
</gene>
<dbReference type="EMBL" id="M94266">
    <property type="protein sequence ID" value="AAA42761.1"/>
    <property type="molecule type" value="Genomic_RNA"/>
</dbReference>
<dbReference type="EMBL" id="AF234533">
    <property type="protein sequence ID" value="AAG10414.1"/>
    <property type="molecule type" value="Genomic_DNA"/>
</dbReference>
<dbReference type="PIR" id="B44060">
    <property type="entry name" value="VGVNBF"/>
</dbReference>
<dbReference type="RefSeq" id="NP_065403.1">
    <property type="nucleotide sequence ID" value="NC_002526.1"/>
</dbReference>
<dbReference type="SMR" id="P32596"/>
<dbReference type="GlyCosmos" id="P32596">
    <property type="glycosylation" value="8 sites, No reported glycans"/>
</dbReference>
<dbReference type="GeneID" id="911730"/>
<dbReference type="KEGG" id="vg:911730"/>
<dbReference type="Proteomes" id="UP000008588">
    <property type="component" value="Segment"/>
</dbReference>
<dbReference type="GO" id="GO:0033644">
    <property type="term" value="C:host cell membrane"/>
    <property type="evidence" value="ECO:0007669"/>
    <property type="project" value="UniProtKB-SubCell"/>
</dbReference>
<dbReference type="GO" id="GO:0016020">
    <property type="term" value="C:membrane"/>
    <property type="evidence" value="ECO:0007669"/>
    <property type="project" value="UniProtKB-KW"/>
</dbReference>
<dbReference type="GO" id="GO:0019031">
    <property type="term" value="C:viral envelope"/>
    <property type="evidence" value="ECO:0007669"/>
    <property type="project" value="InterPro"/>
</dbReference>
<dbReference type="InterPro" id="IPR001903">
    <property type="entry name" value="Rhabdo_glycop_FD"/>
</dbReference>
<dbReference type="Pfam" id="PF00974">
    <property type="entry name" value="Rhabdo_glycop_FD"/>
    <property type="match status" value="1"/>
</dbReference>
<dbReference type="SUPFAM" id="SSF161008">
    <property type="entry name" value="Viral glycoprotein ectodomain-like"/>
    <property type="match status" value="1"/>
</dbReference>
<proteinExistence type="inferred from homology"/>
<feature type="signal peptide" evidence="2">
    <location>
        <begin position="1"/>
        <end position="14"/>
    </location>
</feature>
<feature type="chain" id="PRO_0000040989" description="Non-structural glycoprotein GNS">
    <location>
        <begin position="15"/>
        <end position="586"/>
    </location>
</feature>
<feature type="topological domain" description="Extracellular" evidence="2">
    <location>
        <begin position="15"/>
        <end position="544"/>
    </location>
</feature>
<feature type="transmembrane region" description="Helical" evidence="2">
    <location>
        <begin position="545"/>
        <end position="562"/>
    </location>
</feature>
<feature type="topological domain" description="Cytoplasmic" evidence="2">
    <location>
        <begin position="563"/>
        <end position="586"/>
    </location>
</feature>
<feature type="glycosylation site" description="N-linked (GlcNAc...) asparagine; by host" evidence="2">
    <location>
        <position position="27"/>
    </location>
</feature>
<feature type="glycosylation site" description="N-linked (GlcNAc...) asparagine; by host" evidence="2">
    <location>
        <position position="68"/>
    </location>
</feature>
<feature type="glycosylation site" description="N-linked (GlcNAc...) asparagine; by host" evidence="2">
    <location>
        <position position="274"/>
    </location>
</feature>
<feature type="glycosylation site" description="N-linked (GlcNAc...) asparagine; by host" evidence="2">
    <location>
        <position position="350"/>
    </location>
</feature>
<feature type="glycosylation site" description="N-linked (GlcNAc...) asparagine; by host" evidence="2">
    <location>
        <position position="383"/>
    </location>
</feature>
<feature type="glycosylation site" description="N-linked (GlcNAc...) asparagine; by host" evidence="2">
    <location>
        <position position="476"/>
    </location>
</feature>
<feature type="glycosylation site" description="N-linked (GlcNAc...) asparagine; by host" evidence="2">
    <location>
        <position position="501"/>
    </location>
</feature>
<feature type="glycosylation site" description="N-linked (GlcNAc...) asparagine; by host" evidence="2">
    <location>
        <position position="521"/>
    </location>
</feature>
<evidence type="ECO:0000250" key="1"/>
<evidence type="ECO:0000255" key="2"/>
<evidence type="ECO:0000305" key="3"/>
<organism>
    <name type="scientific">Bovine ephemeral fever virus (strain BB7721)</name>
    <name type="common">BEFV</name>
    <dbReference type="NCBI Taxonomy" id="928297"/>
    <lineage>
        <taxon>Viruses</taxon>
        <taxon>Riboviria</taxon>
        <taxon>Orthornavirae</taxon>
        <taxon>Negarnaviricota</taxon>
        <taxon>Haploviricotina</taxon>
        <taxon>Monjiviricetes</taxon>
        <taxon>Mononegavirales</taxon>
        <taxon>Rhabdoviridae</taxon>
        <taxon>Alpharhabdovirinae</taxon>
        <taxon>Ephemerovirus</taxon>
        <taxon>Ephemerovirus febris</taxon>
    </lineage>
</organism>